<comment type="subcellular location">
    <subcellularLocation>
        <location evidence="2">Cell membrane</location>
        <topology evidence="2">Multi-pass membrane protein</topology>
    </subcellularLocation>
</comment>
<proteinExistence type="predicted"/>
<reference key="1">
    <citation type="journal article" date="1997" name="Nature">
        <title>The complete genome sequence of the Gram-positive bacterium Bacillus subtilis.</title>
        <authorList>
            <person name="Kunst F."/>
            <person name="Ogasawara N."/>
            <person name="Moszer I."/>
            <person name="Albertini A.M."/>
            <person name="Alloni G."/>
            <person name="Azevedo V."/>
            <person name="Bertero M.G."/>
            <person name="Bessieres P."/>
            <person name="Bolotin A."/>
            <person name="Borchert S."/>
            <person name="Borriss R."/>
            <person name="Boursier L."/>
            <person name="Brans A."/>
            <person name="Braun M."/>
            <person name="Brignell S.C."/>
            <person name="Bron S."/>
            <person name="Brouillet S."/>
            <person name="Bruschi C.V."/>
            <person name="Caldwell B."/>
            <person name="Capuano V."/>
            <person name="Carter N.M."/>
            <person name="Choi S.-K."/>
            <person name="Codani J.-J."/>
            <person name="Connerton I.F."/>
            <person name="Cummings N.J."/>
            <person name="Daniel R.A."/>
            <person name="Denizot F."/>
            <person name="Devine K.M."/>
            <person name="Duesterhoeft A."/>
            <person name="Ehrlich S.D."/>
            <person name="Emmerson P.T."/>
            <person name="Entian K.-D."/>
            <person name="Errington J."/>
            <person name="Fabret C."/>
            <person name="Ferrari E."/>
            <person name="Foulger D."/>
            <person name="Fritz C."/>
            <person name="Fujita M."/>
            <person name="Fujita Y."/>
            <person name="Fuma S."/>
            <person name="Galizzi A."/>
            <person name="Galleron N."/>
            <person name="Ghim S.-Y."/>
            <person name="Glaser P."/>
            <person name="Goffeau A."/>
            <person name="Golightly E.J."/>
            <person name="Grandi G."/>
            <person name="Guiseppi G."/>
            <person name="Guy B.J."/>
            <person name="Haga K."/>
            <person name="Haiech J."/>
            <person name="Harwood C.R."/>
            <person name="Henaut A."/>
            <person name="Hilbert H."/>
            <person name="Holsappel S."/>
            <person name="Hosono S."/>
            <person name="Hullo M.-F."/>
            <person name="Itaya M."/>
            <person name="Jones L.-M."/>
            <person name="Joris B."/>
            <person name="Karamata D."/>
            <person name="Kasahara Y."/>
            <person name="Klaerr-Blanchard M."/>
            <person name="Klein C."/>
            <person name="Kobayashi Y."/>
            <person name="Koetter P."/>
            <person name="Koningstein G."/>
            <person name="Krogh S."/>
            <person name="Kumano M."/>
            <person name="Kurita K."/>
            <person name="Lapidus A."/>
            <person name="Lardinois S."/>
            <person name="Lauber J."/>
            <person name="Lazarevic V."/>
            <person name="Lee S.-M."/>
            <person name="Levine A."/>
            <person name="Liu H."/>
            <person name="Masuda S."/>
            <person name="Mauel C."/>
            <person name="Medigue C."/>
            <person name="Medina N."/>
            <person name="Mellado R.P."/>
            <person name="Mizuno M."/>
            <person name="Moestl D."/>
            <person name="Nakai S."/>
            <person name="Noback M."/>
            <person name="Noone D."/>
            <person name="O'Reilly M."/>
            <person name="Ogawa K."/>
            <person name="Ogiwara A."/>
            <person name="Oudega B."/>
            <person name="Park S.-H."/>
            <person name="Parro V."/>
            <person name="Pohl T.M."/>
            <person name="Portetelle D."/>
            <person name="Porwollik S."/>
            <person name="Prescott A.M."/>
            <person name="Presecan E."/>
            <person name="Pujic P."/>
            <person name="Purnelle B."/>
            <person name="Rapoport G."/>
            <person name="Rey M."/>
            <person name="Reynolds S."/>
            <person name="Rieger M."/>
            <person name="Rivolta C."/>
            <person name="Rocha E."/>
            <person name="Roche B."/>
            <person name="Rose M."/>
            <person name="Sadaie Y."/>
            <person name="Sato T."/>
            <person name="Scanlan E."/>
            <person name="Schleich S."/>
            <person name="Schroeter R."/>
            <person name="Scoffone F."/>
            <person name="Sekiguchi J."/>
            <person name="Sekowska A."/>
            <person name="Seror S.J."/>
            <person name="Serror P."/>
            <person name="Shin B.-S."/>
            <person name="Soldo B."/>
            <person name="Sorokin A."/>
            <person name="Tacconi E."/>
            <person name="Takagi T."/>
            <person name="Takahashi H."/>
            <person name="Takemaru K."/>
            <person name="Takeuchi M."/>
            <person name="Tamakoshi A."/>
            <person name="Tanaka T."/>
            <person name="Terpstra P."/>
            <person name="Tognoni A."/>
            <person name="Tosato V."/>
            <person name="Uchiyama S."/>
            <person name="Vandenbol M."/>
            <person name="Vannier F."/>
            <person name="Vassarotti A."/>
            <person name="Viari A."/>
            <person name="Wambutt R."/>
            <person name="Wedler E."/>
            <person name="Wedler H."/>
            <person name="Weitzenegger T."/>
            <person name="Winters P."/>
            <person name="Wipat A."/>
            <person name="Yamamoto H."/>
            <person name="Yamane K."/>
            <person name="Yasumoto K."/>
            <person name="Yata K."/>
            <person name="Yoshida K."/>
            <person name="Yoshikawa H.-F."/>
            <person name="Zumstein E."/>
            <person name="Yoshikawa H."/>
            <person name="Danchin A."/>
        </authorList>
    </citation>
    <scope>NUCLEOTIDE SEQUENCE [LARGE SCALE GENOMIC DNA]</scope>
    <source>
        <strain>168</strain>
    </source>
</reference>
<sequence length="121" mass="14326">MNCFKILHRIKTGKEGFMVFYISLFLILWLAAGFAVGMKQVYVDQLFDKAVIERLEKEANDHGHADRMIKQRVLYIAAVTVSGFISVYYEMKTIPQRRNIRKIEKNIMKLNQAKKRRMKRK</sequence>
<protein>
    <recommendedName>
        <fullName>Uncharacterized membrane protein YndK</fullName>
    </recommendedName>
</protein>
<organism>
    <name type="scientific">Bacillus subtilis (strain 168)</name>
    <dbReference type="NCBI Taxonomy" id="224308"/>
    <lineage>
        <taxon>Bacteria</taxon>
        <taxon>Bacillati</taxon>
        <taxon>Bacillota</taxon>
        <taxon>Bacilli</taxon>
        <taxon>Bacillales</taxon>
        <taxon>Bacillaceae</taxon>
        <taxon>Bacillus</taxon>
    </lineage>
</organism>
<gene>
    <name type="primary">yndK</name>
    <name type="ordered locus">BSU17810</name>
</gene>
<feature type="chain" id="PRO_0000370257" description="Uncharacterized membrane protein YndK">
    <location>
        <begin position="1"/>
        <end position="121"/>
    </location>
</feature>
<feature type="transmembrane region" description="Helical" evidence="1">
    <location>
        <begin position="16"/>
        <end position="36"/>
    </location>
</feature>
<feature type="transmembrane region" description="Helical" evidence="1">
    <location>
        <begin position="74"/>
        <end position="94"/>
    </location>
</feature>
<accession>O31814</accession>
<name>YNDK_BACSU</name>
<dbReference type="EMBL" id="AL009126">
    <property type="protein sequence ID" value="CAB13665.1"/>
    <property type="molecule type" value="Genomic_DNA"/>
</dbReference>
<dbReference type="PIR" id="B69890">
    <property type="entry name" value="B69890"/>
</dbReference>
<dbReference type="RefSeq" id="NP_389664.1">
    <property type="nucleotide sequence ID" value="NC_000964.3"/>
</dbReference>
<dbReference type="RefSeq" id="WP_003231610.1">
    <property type="nucleotide sequence ID" value="NC_000964.3"/>
</dbReference>
<dbReference type="SMR" id="O31814"/>
<dbReference type="FunCoup" id="O31814">
    <property type="interactions" value="2"/>
</dbReference>
<dbReference type="STRING" id="224308.BSU17810"/>
<dbReference type="PaxDb" id="224308-BSU17810"/>
<dbReference type="EnsemblBacteria" id="CAB13665">
    <property type="protein sequence ID" value="CAB13665"/>
    <property type="gene ID" value="BSU_17810"/>
</dbReference>
<dbReference type="GeneID" id="936932"/>
<dbReference type="KEGG" id="bsu:BSU17810"/>
<dbReference type="PATRIC" id="fig|224308.179.peg.1941"/>
<dbReference type="InParanoid" id="O31814"/>
<dbReference type="OrthoDB" id="2905981at2"/>
<dbReference type="BioCyc" id="BSUB:BSU17810-MONOMER"/>
<dbReference type="Proteomes" id="UP000001570">
    <property type="component" value="Chromosome"/>
</dbReference>
<dbReference type="GO" id="GO:0005886">
    <property type="term" value="C:plasma membrane"/>
    <property type="evidence" value="ECO:0007669"/>
    <property type="project" value="UniProtKB-SubCell"/>
</dbReference>
<keyword id="KW-1003">Cell membrane</keyword>
<keyword id="KW-0472">Membrane</keyword>
<keyword id="KW-1185">Reference proteome</keyword>
<keyword id="KW-0812">Transmembrane</keyword>
<keyword id="KW-1133">Transmembrane helix</keyword>
<evidence type="ECO:0000255" key="1"/>
<evidence type="ECO:0000305" key="2"/>